<accession>P67953</accession>
<accession>P05586</accession>
<feature type="chain" id="PRO_0000073134" description="Ovomucoid">
    <location>
        <begin position="1" status="less than"/>
        <end position="56" status="greater than"/>
    </location>
</feature>
<feature type="domain" description="Kazal-like" evidence="1">
    <location>
        <begin position="6"/>
        <end position="56"/>
    </location>
</feature>
<feature type="site" description="Reactive bond 3">
    <location>
        <begin position="18"/>
        <end position="19"/>
    </location>
</feature>
<feature type="glycosylation site" description="N-linked (GlcNAc...) asparagine">
    <location>
        <position position="45"/>
    </location>
</feature>
<feature type="disulfide bond">
    <location>
        <begin position="8"/>
        <end position="38"/>
    </location>
</feature>
<feature type="disulfide bond">
    <location>
        <begin position="16"/>
        <end position="35"/>
    </location>
</feature>
<feature type="disulfide bond">
    <location>
        <begin position="24"/>
        <end position="56"/>
    </location>
</feature>
<feature type="non-terminal residue">
    <location>
        <position position="1"/>
    </location>
</feature>
<feature type="non-terminal residue">
    <location>
        <position position="56"/>
    </location>
</feature>
<protein>
    <recommendedName>
        <fullName>Ovomucoid</fullName>
    </recommendedName>
</protein>
<sequence>LAAVSVDCSEYPKPACTMEYRPLCGSDNKTYGNKCNFCNAVVESNGTLTLSHFGKC</sequence>
<proteinExistence type="evidence at protein level"/>
<comment type="subcellular location">
    <subcellularLocation>
        <location>Secreted</location>
    </subcellularLocation>
</comment>
<comment type="domain">
    <text>Avian ovomucoid consists of three homologous, tandem Kazal family inhibitory domains.</text>
</comment>
<reference key="1">
    <citation type="journal article" date="1987" name="Biochemistry">
        <title>Ovomucoid third domains from 100 avian species: isolation, sequences, and hypervariability of enzyme-inhibitor contact residues.</title>
        <authorList>
            <person name="Laskowski M. Jr."/>
            <person name="Kato I."/>
            <person name="Ardelt W."/>
            <person name="Cook J."/>
            <person name="Denton A."/>
            <person name="Empie M.W."/>
            <person name="Kohr W.J."/>
            <person name="Park S.J."/>
            <person name="Parks K."/>
            <person name="Schatzley B.L."/>
            <person name="Schoenberger O.L."/>
            <person name="Tashiro M."/>
            <person name="Vichot G."/>
            <person name="Whatley H.E."/>
            <person name="Wieczorek A."/>
            <person name="Wieczorek M."/>
        </authorList>
    </citation>
    <scope>PROTEIN SEQUENCE</scope>
</reference>
<name>IOVO_LOPED</name>
<evidence type="ECO:0000255" key="1">
    <source>
        <dbReference type="PROSITE-ProRule" id="PRU00798"/>
    </source>
</evidence>
<dbReference type="SMR" id="P67953"/>
<dbReference type="GO" id="GO:0005615">
    <property type="term" value="C:extracellular space"/>
    <property type="evidence" value="ECO:0007669"/>
    <property type="project" value="UniProtKB-ARBA"/>
</dbReference>
<dbReference type="GO" id="GO:0004867">
    <property type="term" value="F:serine-type endopeptidase inhibitor activity"/>
    <property type="evidence" value="ECO:0007669"/>
    <property type="project" value="UniProtKB-KW"/>
</dbReference>
<dbReference type="CDD" id="cd00104">
    <property type="entry name" value="KAZAL_FS"/>
    <property type="match status" value="1"/>
</dbReference>
<dbReference type="FunFam" id="3.30.60.30:FF:000037">
    <property type="entry name" value="Ovomucoid"/>
    <property type="match status" value="1"/>
</dbReference>
<dbReference type="Gene3D" id="3.30.60.30">
    <property type="match status" value="1"/>
</dbReference>
<dbReference type="InterPro" id="IPR051597">
    <property type="entry name" value="Bifunctional_prot_inhibitor"/>
</dbReference>
<dbReference type="InterPro" id="IPR002350">
    <property type="entry name" value="Kazal_dom"/>
</dbReference>
<dbReference type="InterPro" id="IPR036058">
    <property type="entry name" value="Kazal_dom_sf"/>
</dbReference>
<dbReference type="InterPro" id="IPR001239">
    <property type="entry name" value="Prot_inh_Kazal-m"/>
</dbReference>
<dbReference type="PANTHER" id="PTHR47729:SF1">
    <property type="entry name" value="OVOMUCOID-LIKE-RELATED"/>
    <property type="match status" value="1"/>
</dbReference>
<dbReference type="PANTHER" id="PTHR47729">
    <property type="entry name" value="SERINE PEPTIDASE INHIBITOR, KAZAL TYPE 2, TANDEM DUPLICATE 1-RELATED"/>
    <property type="match status" value="1"/>
</dbReference>
<dbReference type="Pfam" id="PF00050">
    <property type="entry name" value="Kazal_1"/>
    <property type="match status" value="1"/>
</dbReference>
<dbReference type="PRINTS" id="PR00290">
    <property type="entry name" value="KAZALINHBTR"/>
</dbReference>
<dbReference type="SMART" id="SM00280">
    <property type="entry name" value="KAZAL"/>
    <property type="match status" value="1"/>
</dbReference>
<dbReference type="SUPFAM" id="SSF100895">
    <property type="entry name" value="Kazal-type serine protease inhibitors"/>
    <property type="match status" value="1"/>
</dbReference>
<dbReference type="PROSITE" id="PS00282">
    <property type="entry name" value="KAZAL_1"/>
    <property type="match status" value="1"/>
</dbReference>
<dbReference type="PROSITE" id="PS51465">
    <property type="entry name" value="KAZAL_2"/>
    <property type="match status" value="1"/>
</dbReference>
<organism>
    <name type="scientific">Lophura edwardsi</name>
    <name type="common">Edwards's pheasant</name>
    <name type="synonym">Gennaeus edwardsi</name>
    <dbReference type="NCBI Taxonomy" id="9043"/>
    <lineage>
        <taxon>Eukaryota</taxon>
        <taxon>Metazoa</taxon>
        <taxon>Chordata</taxon>
        <taxon>Craniata</taxon>
        <taxon>Vertebrata</taxon>
        <taxon>Euteleostomi</taxon>
        <taxon>Archelosauria</taxon>
        <taxon>Archosauria</taxon>
        <taxon>Dinosauria</taxon>
        <taxon>Saurischia</taxon>
        <taxon>Theropoda</taxon>
        <taxon>Coelurosauria</taxon>
        <taxon>Aves</taxon>
        <taxon>Neognathae</taxon>
        <taxon>Galloanserae</taxon>
        <taxon>Galliformes</taxon>
        <taxon>Phasianidae</taxon>
        <taxon>Phasianinae</taxon>
        <taxon>Lophura</taxon>
    </lineage>
</organism>
<keyword id="KW-0903">Direct protein sequencing</keyword>
<keyword id="KW-1015">Disulfide bond</keyword>
<keyword id="KW-0325">Glycoprotein</keyword>
<keyword id="KW-0646">Protease inhibitor</keyword>
<keyword id="KW-0677">Repeat</keyword>
<keyword id="KW-0964">Secreted</keyword>
<keyword id="KW-0722">Serine protease inhibitor</keyword>